<keyword id="KW-0732">Signal</keyword>
<sequence>MKSVFTISASLAISLMLCCTAQANDHKLLGVIAMPRNETNDLALKLPVCRIVKRIQLSADHGDLQLSGASVYFKAARSASQSLNIPSEIKEGQTTDWININSDNDNKRCVSKITFSGHTVNSSDMATLKIIGDD</sequence>
<organism>
    <name type="scientific">Shigella flexneri serotype 5b (strain 8401)</name>
    <dbReference type="NCBI Taxonomy" id="373384"/>
    <lineage>
        <taxon>Bacteria</taxon>
        <taxon>Pseudomonadati</taxon>
        <taxon>Pseudomonadota</taxon>
        <taxon>Gammaproteobacteria</taxon>
        <taxon>Enterobacterales</taxon>
        <taxon>Enterobacteriaceae</taxon>
        <taxon>Shigella</taxon>
    </lineage>
</organism>
<accession>Q0T8H7</accession>
<gene>
    <name evidence="1" type="primary">yaaI</name>
    <name type="ordered locus">SFV_0011</name>
</gene>
<evidence type="ECO:0000255" key="1">
    <source>
        <dbReference type="HAMAP-Rule" id="MF_01372"/>
    </source>
</evidence>
<comment type="similarity">
    <text evidence="1">Belongs to the UPF0412 family.</text>
</comment>
<dbReference type="EMBL" id="CP000266">
    <property type="protein sequence ID" value="ABF02299.1"/>
    <property type="molecule type" value="Genomic_DNA"/>
</dbReference>
<dbReference type="RefSeq" id="WP_000843568.1">
    <property type="nucleotide sequence ID" value="NC_008258.1"/>
</dbReference>
<dbReference type="KEGG" id="sfv:SFV_0011"/>
<dbReference type="HOGENOM" id="CLU_158661_0_0_6"/>
<dbReference type="Proteomes" id="UP000000659">
    <property type="component" value="Chromosome"/>
</dbReference>
<dbReference type="HAMAP" id="MF_01372">
    <property type="entry name" value="UPF0412"/>
    <property type="match status" value="1"/>
</dbReference>
<dbReference type="InterPro" id="IPR020240">
    <property type="entry name" value="UPF0412_YaaI"/>
</dbReference>
<dbReference type="NCBIfam" id="NF007541">
    <property type="entry name" value="PRK10154.1"/>
    <property type="match status" value="1"/>
</dbReference>
<dbReference type="Pfam" id="PF10807">
    <property type="entry name" value="DUF2541"/>
    <property type="match status" value="1"/>
</dbReference>
<protein>
    <recommendedName>
        <fullName evidence="1">UPF0412 protein YaaI</fullName>
    </recommendedName>
</protein>
<proteinExistence type="inferred from homology"/>
<feature type="signal peptide" evidence="1">
    <location>
        <begin position="1"/>
        <end position="23"/>
    </location>
</feature>
<feature type="chain" id="PRO_0000278592" description="UPF0412 protein YaaI">
    <location>
        <begin position="24"/>
        <end position="134"/>
    </location>
</feature>
<reference key="1">
    <citation type="journal article" date="2006" name="BMC Genomics">
        <title>Complete genome sequence of Shigella flexneri 5b and comparison with Shigella flexneri 2a.</title>
        <authorList>
            <person name="Nie H."/>
            <person name="Yang F."/>
            <person name="Zhang X."/>
            <person name="Yang J."/>
            <person name="Chen L."/>
            <person name="Wang J."/>
            <person name="Xiong Z."/>
            <person name="Peng J."/>
            <person name="Sun L."/>
            <person name="Dong J."/>
            <person name="Xue Y."/>
            <person name="Xu X."/>
            <person name="Chen S."/>
            <person name="Yao Z."/>
            <person name="Shen Y."/>
            <person name="Jin Q."/>
        </authorList>
    </citation>
    <scope>NUCLEOTIDE SEQUENCE [LARGE SCALE GENOMIC DNA]</scope>
    <source>
        <strain>8401</strain>
    </source>
</reference>
<name>YAAI_SHIF8</name>